<proteinExistence type="evidence at transcript level"/>
<comment type="function">
    <text evidence="1">Probable serine lipid hydrolase associated with lipid droplets. Has low cholesterol esterase activity. Appears to lack triglyceride lipase activity. Involved in cholesterol and triglyceride homeostasis; stimulates cellular triglyceride accumulation and cellular cholesterol release. Acts antagonistically with PNPLA2/ATGL in regulation of cellular lipid stores. May regulate triglyceride accumulation indirectly through stimulation of PNPLA2/ATGL ubiquitination and proteasomal degradation. Promotes microtubule-dependent lipid droplet fusion. Highly expressed in macrophage-rich areas in atherosclerotic lesions, suggesting that it could promote cholesterol ester turnover in macrophages.</text>
</comment>
<comment type="catalytic activity">
    <reaction evidence="1">
        <text>a cholesterol ester + H2O = cholesterol + a fatty acid + H(+)</text>
        <dbReference type="Rhea" id="RHEA:36403"/>
        <dbReference type="ChEBI" id="CHEBI:15377"/>
        <dbReference type="ChEBI" id="CHEBI:15378"/>
        <dbReference type="ChEBI" id="CHEBI:16113"/>
        <dbReference type="ChEBI" id="CHEBI:17002"/>
        <dbReference type="ChEBI" id="CHEBI:28868"/>
        <dbReference type="EC" id="3.1.1.13"/>
    </reaction>
    <physiologicalReaction direction="left-to-right" evidence="1">
        <dbReference type="Rhea" id="RHEA:36404"/>
    </physiologicalReaction>
</comment>
<comment type="subcellular location">
    <subcellularLocation>
        <location evidence="1">Lipid droplet</location>
    </subcellularLocation>
    <subcellularLocation>
        <location evidence="1">Endoplasmic reticulum</location>
    </subcellularLocation>
    <text evidence="1">Localizes to the endoplasmic reticulum in absence of lipid droplets and translocates to lipid droplets upon lipid storage induction (By similarity). Lipid droplet localization does not require hydrolase activity (By similarity).</text>
</comment>
<comment type="similarity">
    <text evidence="4">Belongs to the AB hydrolase superfamily. LDAH family.</text>
</comment>
<comment type="caution">
    <text evidence="1">The catalytic activity is unsure despite catalytic sites being conserved (By similarity). May have low cholesterol esterase activity but lack triglyceride lipase activity (By similarity).</text>
</comment>
<accession>Q5HZX7</accession>
<feature type="chain" id="PRO_0000300127" description="Lipid droplet-associated hydrolase">
    <location>
        <begin position="1"/>
        <end position="325"/>
    </location>
</feature>
<feature type="active site" description="Nucleophile" evidence="3">
    <location>
        <position position="139"/>
    </location>
</feature>
<feature type="active site" description="Charge relay system" evidence="2">
    <location>
        <position position="271"/>
    </location>
</feature>
<feature type="active site" description="Charge relay system" evidence="2">
    <location>
        <position position="300"/>
    </location>
</feature>
<sequence>MASEVEDGVPVHEEFFLCGGVETQIIKCGPWTNLFDKQGVSKPKHLIFVIPGNPGLSPFYVPFAKALYSLVKGHFPVWIISHAGFCLTPKDKKILTAPQEPNAQEIEDIYGLNGQIEHKIAFLRAHVPKDVKLIFIGHSVGSYIALHVMNRAPELPVVHTFLLFPTIERMSESPNGKFATPFLCRFRYMLYAASYLIFKPCPEMIKSFIVQKVLEKMSFKSELRLTDLLQPFCLANAAYLGGQEMIHVVKRDDGIIKELLPKLTFYYGKTDGWCPVNYYEDMKRDFPEANLHLCEKGIPHAFVLGFSQEMAAMVADWINNRLPKK</sequence>
<dbReference type="EC" id="3.1.1.13" evidence="1"/>
<dbReference type="EMBL" id="BC088848">
    <property type="protein sequence ID" value="AAH88848.1"/>
    <property type="molecule type" value="mRNA"/>
</dbReference>
<dbReference type="RefSeq" id="NP_001014097.1">
    <property type="nucleotide sequence ID" value="NM_001014075.2"/>
</dbReference>
<dbReference type="RefSeq" id="NP_001381198.1">
    <property type="nucleotide sequence ID" value="NM_001394269.1"/>
</dbReference>
<dbReference type="RefSeq" id="XP_008762813.1">
    <property type="nucleotide sequence ID" value="XM_008764591.2"/>
</dbReference>
<dbReference type="RefSeq" id="XP_063117952.1">
    <property type="nucleotide sequence ID" value="XM_063261882.1"/>
</dbReference>
<dbReference type="FunCoup" id="Q5HZX7">
    <property type="interactions" value="2502"/>
</dbReference>
<dbReference type="STRING" id="10116.ENSRNOP00000033708"/>
<dbReference type="ESTHER" id="rat-Ldah">
    <property type="family name" value="LIDHydrolase"/>
</dbReference>
<dbReference type="PhosphoSitePlus" id="Q5HZX7"/>
<dbReference type="PaxDb" id="10116-ENSRNOP00000033708"/>
<dbReference type="Ensembl" id="ENSRNOT00000115305.1">
    <property type="protein sequence ID" value="ENSRNOP00000088267.1"/>
    <property type="gene ID" value="ENSRNOG00000021475.7"/>
</dbReference>
<dbReference type="GeneID" id="313949"/>
<dbReference type="KEGG" id="rno:313949"/>
<dbReference type="AGR" id="RGD:1311648"/>
<dbReference type="CTD" id="60526"/>
<dbReference type="RGD" id="1311648">
    <property type="gene designation" value="Ldah"/>
</dbReference>
<dbReference type="eggNOG" id="KOG3975">
    <property type="taxonomic scope" value="Eukaryota"/>
</dbReference>
<dbReference type="GeneTree" id="ENSGT00390000009688"/>
<dbReference type="HOGENOM" id="CLU_018394_2_1_1"/>
<dbReference type="InParanoid" id="Q5HZX7"/>
<dbReference type="OMA" id="WVPVSYY"/>
<dbReference type="OrthoDB" id="448051at2759"/>
<dbReference type="PhylomeDB" id="Q5HZX7"/>
<dbReference type="TreeFam" id="TF313050"/>
<dbReference type="PRO" id="PR:Q5HZX7"/>
<dbReference type="Proteomes" id="UP000002494">
    <property type="component" value="Chromosome 6"/>
</dbReference>
<dbReference type="Bgee" id="ENSRNOG00000021475">
    <property type="expression patterns" value="Expressed in duodenum and 19 other cell types or tissues"/>
</dbReference>
<dbReference type="GO" id="GO:0005783">
    <property type="term" value="C:endoplasmic reticulum"/>
    <property type="evidence" value="ECO:0000250"/>
    <property type="project" value="UniProtKB"/>
</dbReference>
<dbReference type="GO" id="GO:0005811">
    <property type="term" value="C:lipid droplet"/>
    <property type="evidence" value="ECO:0000250"/>
    <property type="project" value="UniProtKB"/>
</dbReference>
<dbReference type="GO" id="GO:0004771">
    <property type="term" value="F:sterol ester esterase activity"/>
    <property type="evidence" value="ECO:0000250"/>
    <property type="project" value="UniProtKB"/>
</dbReference>
<dbReference type="GO" id="GO:0042632">
    <property type="term" value="P:cholesterol homeostasis"/>
    <property type="evidence" value="ECO:0000250"/>
    <property type="project" value="UniProtKB"/>
</dbReference>
<dbReference type="GO" id="GO:0035356">
    <property type="term" value="P:intracellular triglyceride homeostasis"/>
    <property type="evidence" value="ECO:0000250"/>
    <property type="project" value="UniProtKB"/>
</dbReference>
<dbReference type="GO" id="GO:0160077">
    <property type="term" value="P:lipid droplet fusion"/>
    <property type="evidence" value="ECO:0000250"/>
    <property type="project" value="UniProtKB"/>
</dbReference>
<dbReference type="GO" id="GO:0019915">
    <property type="term" value="P:lipid storage"/>
    <property type="evidence" value="ECO:0000318"/>
    <property type="project" value="GO_Central"/>
</dbReference>
<dbReference type="FunFam" id="3.40.50.1820:FF:000068">
    <property type="entry name" value="Lipid droplet associated hydrolase"/>
    <property type="match status" value="1"/>
</dbReference>
<dbReference type="Gene3D" id="3.40.50.1820">
    <property type="entry name" value="alpha/beta hydrolase"/>
    <property type="match status" value="1"/>
</dbReference>
<dbReference type="InterPro" id="IPR029058">
    <property type="entry name" value="AB_hydrolase_fold"/>
</dbReference>
<dbReference type="InterPro" id="IPR019363">
    <property type="entry name" value="LDAH"/>
</dbReference>
<dbReference type="PANTHER" id="PTHR13390">
    <property type="entry name" value="LIPASE"/>
    <property type="match status" value="1"/>
</dbReference>
<dbReference type="PANTHER" id="PTHR13390:SF0">
    <property type="entry name" value="LIPID DROPLET-ASSOCIATED HYDROLASE"/>
    <property type="match status" value="1"/>
</dbReference>
<dbReference type="Pfam" id="PF10230">
    <property type="entry name" value="LIDHydrolase"/>
    <property type="match status" value="1"/>
</dbReference>
<dbReference type="SUPFAM" id="SSF53474">
    <property type="entry name" value="alpha/beta-Hydrolases"/>
    <property type="match status" value="1"/>
</dbReference>
<dbReference type="PROSITE" id="PS00120">
    <property type="entry name" value="LIPASE_SER"/>
    <property type="match status" value="1"/>
</dbReference>
<gene>
    <name evidence="5" type="primary">Ldah</name>
</gene>
<evidence type="ECO:0000250" key="1">
    <source>
        <dbReference type="UniProtKB" id="Q8BVA5"/>
    </source>
</evidence>
<evidence type="ECO:0000250" key="2">
    <source>
        <dbReference type="UniProtKB" id="Q9H6V9"/>
    </source>
</evidence>
<evidence type="ECO:0000255" key="3">
    <source>
        <dbReference type="PROSITE-ProRule" id="PRU10037"/>
    </source>
</evidence>
<evidence type="ECO:0000305" key="4"/>
<evidence type="ECO:0000312" key="5">
    <source>
        <dbReference type="RGD" id="1311648"/>
    </source>
</evidence>
<name>LDAH_RAT</name>
<organism>
    <name type="scientific">Rattus norvegicus</name>
    <name type="common">Rat</name>
    <dbReference type="NCBI Taxonomy" id="10116"/>
    <lineage>
        <taxon>Eukaryota</taxon>
        <taxon>Metazoa</taxon>
        <taxon>Chordata</taxon>
        <taxon>Craniata</taxon>
        <taxon>Vertebrata</taxon>
        <taxon>Euteleostomi</taxon>
        <taxon>Mammalia</taxon>
        <taxon>Eutheria</taxon>
        <taxon>Euarchontoglires</taxon>
        <taxon>Glires</taxon>
        <taxon>Rodentia</taxon>
        <taxon>Myomorpha</taxon>
        <taxon>Muroidea</taxon>
        <taxon>Muridae</taxon>
        <taxon>Murinae</taxon>
        <taxon>Rattus</taxon>
    </lineage>
</organism>
<keyword id="KW-0256">Endoplasmic reticulum</keyword>
<keyword id="KW-0378">Hydrolase</keyword>
<keyword id="KW-0551">Lipid droplet</keyword>
<keyword id="KW-1185">Reference proteome</keyword>
<protein>
    <recommendedName>
        <fullName evidence="1">Lipid droplet-associated hydrolase</fullName>
        <ecNumber evidence="1">3.1.1.13</ecNumber>
    </recommendedName>
    <alternativeName>
        <fullName evidence="1">Lipid droplet-associated serine hydrolase</fullName>
    </alternativeName>
</protein>
<reference key="1">
    <citation type="journal article" date="2004" name="Genome Res.">
        <title>The status, quality, and expansion of the NIH full-length cDNA project: the Mammalian Gene Collection (MGC).</title>
        <authorList>
            <consortium name="The MGC Project Team"/>
        </authorList>
    </citation>
    <scope>NUCLEOTIDE SEQUENCE [LARGE SCALE MRNA]</scope>
    <source>
        <tissue>Brain</tissue>
    </source>
</reference>